<comment type="function">
    <text evidence="1">Required for the formation of a threonylcarbamoyl group on adenosine at position 37 (t(6)A37) in tRNAs that read codons beginning with adenine. Catalyzes the conversion of L-threonine, HCO(3)(-)/CO(2) and ATP to give threonylcarbamoyl-AMP (TC-AMP) as the acyladenylate intermediate, with the release of diphosphate.</text>
</comment>
<comment type="catalytic activity">
    <reaction evidence="1">
        <text>L-threonine + hydrogencarbonate + ATP = L-threonylcarbamoyladenylate + diphosphate + H2O</text>
        <dbReference type="Rhea" id="RHEA:36407"/>
        <dbReference type="ChEBI" id="CHEBI:15377"/>
        <dbReference type="ChEBI" id="CHEBI:17544"/>
        <dbReference type="ChEBI" id="CHEBI:30616"/>
        <dbReference type="ChEBI" id="CHEBI:33019"/>
        <dbReference type="ChEBI" id="CHEBI:57926"/>
        <dbReference type="ChEBI" id="CHEBI:73682"/>
        <dbReference type="EC" id="2.7.7.87"/>
    </reaction>
</comment>
<comment type="subcellular location">
    <subcellularLocation>
        <location evidence="1">Cytoplasm</location>
    </subcellularLocation>
</comment>
<comment type="similarity">
    <text evidence="1">Belongs to the SUA5 family. TsaC subfamily.</text>
</comment>
<keyword id="KW-0067">ATP-binding</keyword>
<keyword id="KW-0963">Cytoplasm</keyword>
<keyword id="KW-0547">Nucleotide-binding</keyword>
<keyword id="KW-0548">Nucleotidyltransferase</keyword>
<keyword id="KW-0808">Transferase</keyword>
<keyword id="KW-0819">tRNA processing</keyword>
<protein>
    <recommendedName>
        <fullName evidence="1">Threonylcarbamoyl-AMP synthase</fullName>
        <shortName evidence="1">TC-AMP synthase</shortName>
        <ecNumber evidence="1">2.7.7.87</ecNumber>
    </recommendedName>
    <alternativeName>
        <fullName evidence="1">L-threonylcarbamoyladenylate synthase</fullName>
    </alternativeName>
    <alternativeName>
        <fullName evidence="1">t(6)A37 threonylcarbamoyladenosine biosynthesis protein TsaC</fullName>
    </alternativeName>
    <alternativeName>
        <fullName evidence="1">tRNA threonylcarbamoyladenosine biosynthesis protein TsaC</fullName>
    </alternativeName>
</protein>
<dbReference type="EC" id="2.7.7.87" evidence="1"/>
<dbReference type="EMBL" id="CP000308">
    <property type="protein sequence ID" value="ABG15189.1"/>
    <property type="molecule type" value="Genomic_DNA"/>
</dbReference>
<dbReference type="RefSeq" id="WP_002209025.1">
    <property type="nucleotide sequence ID" value="NZ_CP009906.1"/>
</dbReference>
<dbReference type="SMR" id="Q1C2Y3"/>
<dbReference type="GeneID" id="57974358"/>
<dbReference type="KEGG" id="ypa:YPA_3227"/>
<dbReference type="Proteomes" id="UP000001971">
    <property type="component" value="Chromosome"/>
</dbReference>
<dbReference type="GO" id="GO:0005737">
    <property type="term" value="C:cytoplasm"/>
    <property type="evidence" value="ECO:0007669"/>
    <property type="project" value="UniProtKB-SubCell"/>
</dbReference>
<dbReference type="GO" id="GO:0005524">
    <property type="term" value="F:ATP binding"/>
    <property type="evidence" value="ECO:0007669"/>
    <property type="project" value="UniProtKB-UniRule"/>
</dbReference>
<dbReference type="GO" id="GO:0003725">
    <property type="term" value="F:double-stranded RNA binding"/>
    <property type="evidence" value="ECO:0007669"/>
    <property type="project" value="InterPro"/>
</dbReference>
<dbReference type="GO" id="GO:0061710">
    <property type="term" value="F:L-threonylcarbamoyladenylate synthase"/>
    <property type="evidence" value="ECO:0007669"/>
    <property type="project" value="UniProtKB-EC"/>
</dbReference>
<dbReference type="GO" id="GO:0000049">
    <property type="term" value="F:tRNA binding"/>
    <property type="evidence" value="ECO:0007669"/>
    <property type="project" value="TreeGrafter"/>
</dbReference>
<dbReference type="GO" id="GO:0006450">
    <property type="term" value="P:regulation of translational fidelity"/>
    <property type="evidence" value="ECO:0007669"/>
    <property type="project" value="TreeGrafter"/>
</dbReference>
<dbReference type="GO" id="GO:0002949">
    <property type="term" value="P:tRNA threonylcarbamoyladenosine modification"/>
    <property type="evidence" value="ECO:0007669"/>
    <property type="project" value="UniProtKB-UniRule"/>
</dbReference>
<dbReference type="FunFam" id="3.90.870.10:FF:000004">
    <property type="entry name" value="Threonylcarbamoyl-AMP synthase"/>
    <property type="match status" value="1"/>
</dbReference>
<dbReference type="Gene3D" id="3.90.870.10">
    <property type="entry name" value="DHBP synthase"/>
    <property type="match status" value="1"/>
</dbReference>
<dbReference type="HAMAP" id="MF_01852">
    <property type="entry name" value="TsaC"/>
    <property type="match status" value="1"/>
</dbReference>
<dbReference type="InterPro" id="IPR017945">
    <property type="entry name" value="DHBP_synth_RibB-like_a/b_dom"/>
</dbReference>
<dbReference type="InterPro" id="IPR006070">
    <property type="entry name" value="Sua5-like_dom"/>
</dbReference>
<dbReference type="InterPro" id="IPR023535">
    <property type="entry name" value="TC-AMP_synthase"/>
</dbReference>
<dbReference type="InterPro" id="IPR050156">
    <property type="entry name" value="TC-AMP_synthase_SUA5"/>
</dbReference>
<dbReference type="NCBIfam" id="NF007919">
    <property type="entry name" value="PRK10634.1"/>
    <property type="match status" value="1"/>
</dbReference>
<dbReference type="PANTHER" id="PTHR17490">
    <property type="entry name" value="SUA5"/>
    <property type="match status" value="1"/>
</dbReference>
<dbReference type="PANTHER" id="PTHR17490:SF18">
    <property type="entry name" value="THREONYLCARBAMOYL-AMP SYNTHASE"/>
    <property type="match status" value="1"/>
</dbReference>
<dbReference type="Pfam" id="PF01300">
    <property type="entry name" value="Sua5_yciO_yrdC"/>
    <property type="match status" value="1"/>
</dbReference>
<dbReference type="SUPFAM" id="SSF55821">
    <property type="entry name" value="YrdC/RibB"/>
    <property type="match status" value="1"/>
</dbReference>
<dbReference type="PROSITE" id="PS51163">
    <property type="entry name" value="YRDC"/>
    <property type="match status" value="1"/>
</dbReference>
<gene>
    <name evidence="1" type="primary">tsaC</name>
    <name type="synonym">rimN</name>
    <name type="ordered locus">YPA_3227</name>
</gene>
<accession>Q1C2Y3</accession>
<name>TSAC_YERPA</name>
<reference key="1">
    <citation type="journal article" date="2006" name="J. Bacteriol.">
        <title>Complete genome sequence of Yersinia pestis strains Antiqua and Nepal516: evidence of gene reduction in an emerging pathogen.</title>
        <authorList>
            <person name="Chain P.S.G."/>
            <person name="Hu P."/>
            <person name="Malfatti S.A."/>
            <person name="Radnedge L."/>
            <person name="Larimer F."/>
            <person name="Vergez L.M."/>
            <person name="Worsham P."/>
            <person name="Chu M.C."/>
            <person name="Andersen G.L."/>
        </authorList>
    </citation>
    <scope>NUCLEOTIDE SEQUENCE [LARGE SCALE GENOMIC DNA]</scope>
    <source>
        <strain>Antiqua</strain>
    </source>
</reference>
<proteinExistence type="inferred from homology"/>
<organism>
    <name type="scientific">Yersinia pestis bv. Antiqua (strain Antiqua)</name>
    <dbReference type="NCBI Taxonomy" id="360102"/>
    <lineage>
        <taxon>Bacteria</taxon>
        <taxon>Pseudomonadati</taxon>
        <taxon>Pseudomonadota</taxon>
        <taxon>Gammaproteobacteria</taxon>
        <taxon>Enterobacterales</taxon>
        <taxon>Yersiniaceae</taxon>
        <taxon>Yersinia</taxon>
    </lineage>
</organism>
<feature type="chain" id="PRO_0000353025" description="Threonylcarbamoyl-AMP synthase">
    <location>
        <begin position="1"/>
        <end position="190"/>
    </location>
</feature>
<feature type="domain" description="YrdC-like" evidence="1">
    <location>
        <begin position="7"/>
        <end position="190"/>
    </location>
</feature>
<evidence type="ECO:0000255" key="1">
    <source>
        <dbReference type="HAMAP-Rule" id="MF_01852"/>
    </source>
</evidence>
<sequence>MNQQENNFVLADIVRALRQEEVIAYPTEAVFGLGCDPDSEKAVNTLLALKQRPWQKGLILVAANYAQLEPYINDSMLNEIQRETLFSTWPGPITWVIPARVETPQWLTGCFDSLAVRVSNHPLVQQLCAEYGKPLVSTSANLSGHEPCRTEEEVRIQFGPSLPVLSGHVGGRLNPSEIRDALTGKRFRQG</sequence>